<organism>
    <name type="scientific">Hyperthermus butylicus (strain DSM 5456 / JCM 9403 / PLM1-5)</name>
    <dbReference type="NCBI Taxonomy" id="415426"/>
    <lineage>
        <taxon>Archaea</taxon>
        <taxon>Thermoproteota</taxon>
        <taxon>Thermoprotei</taxon>
        <taxon>Desulfurococcales</taxon>
        <taxon>Pyrodictiaceae</taxon>
        <taxon>Hyperthermus</taxon>
    </lineage>
</organism>
<keyword id="KW-0963">Cytoplasm</keyword>
<keyword id="KW-0255">Endonuclease</keyword>
<keyword id="KW-0378">Hydrolase</keyword>
<keyword id="KW-0540">Nuclease</keyword>
<keyword id="KW-1185">Reference proteome</keyword>
<keyword id="KW-0819">tRNA processing</keyword>
<reference key="1">
    <citation type="journal article" date="2007" name="Archaea">
        <title>The genome of Hyperthermus butylicus: a sulfur-reducing, peptide fermenting, neutrophilic Crenarchaeote growing up to 108 degrees C.</title>
        <authorList>
            <person name="Bruegger K."/>
            <person name="Chen L."/>
            <person name="Stark M."/>
            <person name="Zibat A."/>
            <person name="Redder P."/>
            <person name="Ruepp A."/>
            <person name="Awayez M."/>
            <person name="She Q."/>
            <person name="Garrett R.A."/>
            <person name="Klenk H.-P."/>
        </authorList>
    </citation>
    <scope>NUCLEOTIDE SEQUENCE [LARGE SCALE GENOMIC DNA]</scope>
    <source>
        <strain>DSM 5456 / JCM 9403 / PLM1-5</strain>
    </source>
</reference>
<name>RNP1_HYPBU</name>
<feature type="chain" id="PRO_1000046610" description="Ribonuclease P protein component 1">
    <location>
        <begin position="1"/>
        <end position="111"/>
    </location>
</feature>
<evidence type="ECO:0000255" key="1">
    <source>
        <dbReference type="HAMAP-Rule" id="MF_00754"/>
    </source>
</evidence>
<gene>
    <name evidence="1" type="primary">rnp1</name>
    <name type="ordered locus">Hbut_1308</name>
</gene>
<comment type="function">
    <text evidence="1">Part of ribonuclease P, a protein complex that generates mature tRNA molecules by cleaving their 5'-ends.</text>
</comment>
<comment type="catalytic activity">
    <reaction evidence="1">
        <text>Endonucleolytic cleavage of RNA, removing 5'-extranucleotides from tRNA precursor.</text>
        <dbReference type="EC" id="3.1.26.5"/>
    </reaction>
</comment>
<comment type="subunit">
    <text evidence="1">Consists of a catalytic RNA component and at least 4-5 protein subunits.</text>
</comment>
<comment type="subcellular location">
    <subcellularLocation>
        <location evidence="1">Cytoplasm</location>
    </subcellularLocation>
</comment>
<comment type="similarity">
    <text evidence="1">Belongs to the eukaryotic/archaeal RNase P protein component 1 family.</text>
</comment>
<sequence>MKRTAWNIVFHSLIGLRARVLATSDPGLRGLEGVVVEETRHSLVVETRDGRRVRVLKANSIFLFQLPGGSWVVVRGEEIAGSLAERVKRLGRLKGVGWLVRAGEKRRYTRG</sequence>
<accession>A2BMC7</accession>
<proteinExistence type="inferred from homology"/>
<protein>
    <recommendedName>
        <fullName evidence="1">Ribonuclease P protein component 1</fullName>
        <shortName evidence="1">RNase P component 1</shortName>
        <ecNumber evidence="1">3.1.26.5</ecNumber>
    </recommendedName>
    <alternativeName>
        <fullName evidence="1">Rpp29</fullName>
    </alternativeName>
</protein>
<dbReference type="EC" id="3.1.26.5" evidence="1"/>
<dbReference type="EMBL" id="CP000493">
    <property type="protein sequence ID" value="ABM81138.1"/>
    <property type="molecule type" value="Genomic_DNA"/>
</dbReference>
<dbReference type="RefSeq" id="WP_011822456.1">
    <property type="nucleotide sequence ID" value="NC_008818.1"/>
</dbReference>
<dbReference type="SMR" id="A2BMC7"/>
<dbReference type="STRING" id="415426.Hbut_1308"/>
<dbReference type="EnsemblBacteria" id="ABM81138">
    <property type="protein sequence ID" value="ABM81138"/>
    <property type="gene ID" value="Hbut_1308"/>
</dbReference>
<dbReference type="GeneID" id="4782900"/>
<dbReference type="KEGG" id="hbu:Hbut_1308"/>
<dbReference type="eggNOG" id="arCOG00784">
    <property type="taxonomic scope" value="Archaea"/>
</dbReference>
<dbReference type="HOGENOM" id="CLU_107020_3_0_2"/>
<dbReference type="OrthoDB" id="39019at2157"/>
<dbReference type="Proteomes" id="UP000002593">
    <property type="component" value="Chromosome"/>
</dbReference>
<dbReference type="GO" id="GO:0005737">
    <property type="term" value="C:cytoplasm"/>
    <property type="evidence" value="ECO:0007669"/>
    <property type="project" value="UniProtKB-SubCell"/>
</dbReference>
<dbReference type="GO" id="GO:0030677">
    <property type="term" value="C:ribonuclease P complex"/>
    <property type="evidence" value="ECO:0007669"/>
    <property type="project" value="UniProtKB-UniRule"/>
</dbReference>
<dbReference type="GO" id="GO:0004526">
    <property type="term" value="F:ribonuclease P activity"/>
    <property type="evidence" value="ECO:0007669"/>
    <property type="project" value="UniProtKB-UniRule"/>
</dbReference>
<dbReference type="GO" id="GO:0003723">
    <property type="term" value="F:RNA binding"/>
    <property type="evidence" value="ECO:0007669"/>
    <property type="project" value="InterPro"/>
</dbReference>
<dbReference type="GO" id="GO:0001682">
    <property type="term" value="P:tRNA 5'-leader removal"/>
    <property type="evidence" value="ECO:0007669"/>
    <property type="project" value="UniProtKB-UniRule"/>
</dbReference>
<dbReference type="Gene3D" id="2.30.30.210">
    <property type="entry name" value="Ribonuclease P/MRP, subunit p29"/>
    <property type="match status" value="1"/>
</dbReference>
<dbReference type="HAMAP" id="MF_00754">
    <property type="entry name" value="RNase_P_1"/>
    <property type="match status" value="1"/>
</dbReference>
<dbReference type="InterPro" id="IPR036980">
    <property type="entry name" value="RNase_P/MRP_Rpp29_sf"/>
</dbReference>
<dbReference type="InterPro" id="IPR023538">
    <property type="entry name" value="RNP1"/>
</dbReference>
<dbReference type="InterPro" id="IPR023534">
    <property type="entry name" value="Rof/RNase_P-like"/>
</dbReference>
<dbReference type="InterPro" id="IPR002730">
    <property type="entry name" value="Rpp29/RNP1"/>
</dbReference>
<dbReference type="Pfam" id="PF01868">
    <property type="entry name" value="RNase_P-MRP_p29"/>
    <property type="match status" value="1"/>
</dbReference>
<dbReference type="SMART" id="SM00538">
    <property type="entry name" value="POP4"/>
    <property type="match status" value="1"/>
</dbReference>
<dbReference type="SUPFAM" id="SSF101744">
    <property type="entry name" value="Rof/RNase P subunit-like"/>
    <property type="match status" value="1"/>
</dbReference>